<gene>
    <name evidence="1" type="primary">cmoB</name>
    <name type="ordered locus">Hac_0607</name>
</gene>
<protein>
    <recommendedName>
        <fullName evidence="1">tRNA U34 carboxymethyltransferase</fullName>
        <ecNumber evidence="1">2.5.1.-</ecNumber>
    </recommendedName>
</protein>
<accession>Q17Y58</accession>
<organism>
    <name type="scientific">Helicobacter acinonychis (strain Sheeba)</name>
    <dbReference type="NCBI Taxonomy" id="382638"/>
    <lineage>
        <taxon>Bacteria</taxon>
        <taxon>Pseudomonadati</taxon>
        <taxon>Campylobacterota</taxon>
        <taxon>Epsilonproteobacteria</taxon>
        <taxon>Campylobacterales</taxon>
        <taxon>Helicobacteraceae</taxon>
        <taxon>Helicobacter</taxon>
    </lineage>
</organism>
<name>CMOB_HELAH</name>
<sequence>MLICNDNLNQKTLLEEIMALRPWRKGPFEISKIKIDSEWDSSIKWDLVKNATSLKDKIVADVGCNNGYYLFKMLEHGPKSLVGFDPGVLVKKQFEFLAPFFDKEKKIIYKSLGVEDLNEKYPNAFDVIFCLGVLYHRKSPLETLKALYHALKIGGELVLDTLIIDSPLDIALCPKKTYAKMKNAYFIPSISALKGWCERVGFGDFEIISVLKTTPKEQRKTDFILGQSLEDFLDKKDHSKTLEGYDAPLRGYFKMLKSSSKR</sequence>
<reference key="1">
    <citation type="journal article" date="2006" name="PLoS Genet.">
        <title>Who ate whom? Adaptive Helicobacter genomic changes that accompanied a host jump from early humans to large felines.</title>
        <authorList>
            <person name="Eppinger M."/>
            <person name="Baar C."/>
            <person name="Linz B."/>
            <person name="Raddatz G."/>
            <person name="Lanz C."/>
            <person name="Keller H."/>
            <person name="Morelli G."/>
            <person name="Gressmann H."/>
            <person name="Achtman M."/>
            <person name="Schuster S.C."/>
        </authorList>
    </citation>
    <scope>NUCLEOTIDE SEQUENCE [LARGE SCALE GENOMIC DNA]</scope>
    <source>
        <strain>Sheeba</strain>
    </source>
</reference>
<dbReference type="EC" id="2.5.1.-" evidence="1"/>
<dbReference type="EMBL" id="AM260522">
    <property type="protein sequence ID" value="CAJ99418.1"/>
    <property type="molecule type" value="Genomic_DNA"/>
</dbReference>
<dbReference type="RefSeq" id="WP_011577532.1">
    <property type="nucleotide sequence ID" value="NC_008229.1"/>
</dbReference>
<dbReference type="SMR" id="Q17Y58"/>
<dbReference type="STRING" id="382638.Hac_0607"/>
<dbReference type="GeneID" id="31758079"/>
<dbReference type="KEGG" id="hac:Hac_0607"/>
<dbReference type="eggNOG" id="COG0500">
    <property type="taxonomic scope" value="Bacteria"/>
</dbReference>
<dbReference type="HOGENOM" id="CLU_052665_1_0_7"/>
<dbReference type="OrthoDB" id="9765084at2"/>
<dbReference type="BioCyc" id="HACI382638:HAC_RS02675-MONOMER"/>
<dbReference type="Proteomes" id="UP000000775">
    <property type="component" value="Chromosome"/>
</dbReference>
<dbReference type="GO" id="GO:0016765">
    <property type="term" value="F:transferase activity, transferring alkyl or aryl (other than methyl) groups"/>
    <property type="evidence" value="ECO:0007669"/>
    <property type="project" value="InterPro"/>
</dbReference>
<dbReference type="GO" id="GO:0002098">
    <property type="term" value="P:tRNA wobble uridine modification"/>
    <property type="evidence" value="ECO:0007669"/>
    <property type="project" value="InterPro"/>
</dbReference>
<dbReference type="CDD" id="cd02440">
    <property type="entry name" value="AdoMet_MTases"/>
    <property type="match status" value="1"/>
</dbReference>
<dbReference type="Gene3D" id="3.40.50.150">
    <property type="entry name" value="Vaccinia Virus protein VP39"/>
    <property type="match status" value="1"/>
</dbReference>
<dbReference type="HAMAP" id="MF_01590">
    <property type="entry name" value="tRNA_carboxymethyltr_CmoB"/>
    <property type="match status" value="1"/>
</dbReference>
<dbReference type="InterPro" id="IPR010017">
    <property type="entry name" value="CmoB"/>
</dbReference>
<dbReference type="InterPro" id="IPR027555">
    <property type="entry name" value="Mo5U34_MeTrfas-like"/>
</dbReference>
<dbReference type="InterPro" id="IPR029063">
    <property type="entry name" value="SAM-dependent_MTases_sf"/>
</dbReference>
<dbReference type="NCBIfam" id="NF011650">
    <property type="entry name" value="PRK15068.1"/>
    <property type="match status" value="1"/>
</dbReference>
<dbReference type="NCBIfam" id="TIGR00452">
    <property type="entry name" value="tRNA 5-methoxyuridine(34)/uridine 5-oxyacetic acid(34) synthase CmoB"/>
    <property type="match status" value="1"/>
</dbReference>
<dbReference type="Pfam" id="PF08003">
    <property type="entry name" value="Methyltransf_9"/>
    <property type="match status" value="1"/>
</dbReference>
<dbReference type="SUPFAM" id="SSF53335">
    <property type="entry name" value="S-adenosyl-L-methionine-dependent methyltransferases"/>
    <property type="match status" value="1"/>
</dbReference>
<proteinExistence type="inferred from homology"/>
<comment type="function">
    <text evidence="1">Catalyzes carboxymethyl transfer from carboxy-S-adenosyl-L-methionine (Cx-SAM) to 5-hydroxyuridine (ho5U) to form 5-carboxymethoxyuridine (cmo5U) at position 34 in tRNAs.</text>
</comment>
<comment type="catalytic activity">
    <reaction evidence="1">
        <text>carboxy-S-adenosyl-L-methionine + 5-hydroxyuridine(34) in tRNA = 5-carboxymethoxyuridine(34) in tRNA + S-adenosyl-L-homocysteine + H(+)</text>
        <dbReference type="Rhea" id="RHEA:52848"/>
        <dbReference type="Rhea" id="RHEA-COMP:13381"/>
        <dbReference type="Rhea" id="RHEA-COMP:13383"/>
        <dbReference type="ChEBI" id="CHEBI:15378"/>
        <dbReference type="ChEBI" id="CHEBI:57856"/>
        <dbReference type="ChEBI" id="CHEBI:134278"/>
        <dbReference type="ChEBI" id="CHEBI:136877"/>
        <dbReference type="ChEBI" id="CHEBI:136879"/>
    </reaction>
</comment>
<comment type="subunit">
    <text evidence="1">Homotetramer.</text>
</comment>
<comment type="similarity">
    <text evidence="1">Belongs to the class I-like SAM-binding methyltransferase superfamily. CmoB family.</text>
</comment>
<keyword id="KW-0808">Transferase</keyword>
<keyword id="KW-0819">tRNA processing</keyword>
<evidence type="ECO:0000255" key="1">
    <source>
        <dbReference type="HAMAP-Rule" id="MF_01590"/>
    </source>
</evidence>
<feature type="chain" id="PRO_0000313927" description="tRNA U34 carboxymethyltransferase">
    <location>
        <begin position="1"/>
        <end position="262"/>
    </location>
</feature>
<feature type="binding site" evidence="1">
    <location>
        <position position="25"/>
    </location>
    <ligand>
        <name>carboxy-S-adenosyl-L-methionine</name>
        <dbReference type="ChEBI" id="CHEBI:134278"/>
    </ligand>
</feature>
<feature type="binding site" evidence="1">
    <location>
        <position position="39"/>
    </location>
    <ligand>
        <name>carboxy-S-adenosyl-L-methionine</name>
        <dbReference type="ChEBI" id="CHEBI:134278"/>
    </ligand>
</feature>
<feature type="binding site" evidence="1">
    <location>
        <position position="44"/>
    </location>
    <ligand>
        <name>carboxy-S-adenosyl-L-methionine</name>
        <dbReference type="ChEBI" id="CHEBI:134278"/>
    </ligand>
</feature>
<feature type="binding site" evidence="1">
    <location>
        <position position="63"/>
    </location>
    <ligand>
        <name>carboxy-S-adenosyl-L-methionine</name>
        <dbReference type="ChEBI" id="CHEBI:134278"/>
    </ligand>
</feature>
<feature type="binding site" evidence="1">
    <location>
        <begin position="114"/>
        <end position="115"/>
    </location>
    <ligand>
        <name>carboxy-S-adenosyl-L-methionine</name>
        <dbReference type="ChEBI" id="CHEBI:134278"/>
    </ligand>
</feature>
<feature type="binding site" evidence="1">
    <location>
        <position position="135"/>
    </location>
    <ligand>
        <name>carboxy-S-adenosyl-L-methionine</name>
        <dbReference type="ChEBI" id="CHEBI:134278"/>
    </ligand>
</feature>
<feature type="binding site" evidence="1">
    <location>
        <position position="250"/>
    </location>
    <ligand>
        <name>carboxy-S-adenosyl-L-methionine</name>
        <dbReference type="ChEBI" id="CHEBI:134278"/>
    </ligand>
</feature>